<proteinExistence type="inferred from homology"/>
<sequence>MSDQKKMTYKDAGVDIDAGNRFVQLIKPLVKATSRPEVLTDIGGFGGLFSLHADKYKKPTLVASTDGVGTKLKLAFMMDKHDTVGIDLVAMCVNDIVVQGAEPLFFLDYMATGKLTPEKAQDVVKGISEGCIQAGCALIGGETAEMPGFYGEGEYDLAGFTVGIVDNTSIIDGSGITVGDRLIGLASSGLHSNGYSLARKVLFEHLGLNADSKVEELDLSVGEELLKPTRIYVKTILNLLRDFQIKGMAHITGGGLVENVPRMMPKNCQAIIHKDSWPKPPIFELLRKAGNIEEEEMYRTLNYGIGMVLVVPETEAEEIMVRLSGLKEDAFIIGEIAKSAEEGEPTVTLI</sequence>
<comment type="catalytic activity">
    <reaction evidence="1">
        <text>2-formamido-N(1)-(5-O-phospho-beta-D-ribosyl)acetamidine + ATP = 5-amino-1-(5-phospho-beta-D-ribosyl)imidazole + ADP + phosphate + H(+)</text>
        <dbReference type="Rhea" id="RHEA:23032"/>
        <dbReference type="ChEBI" id="CHEBI:15378"/>
        <dbReference type="ChEBI" id="CHEBI:30616"/>
        <dbReference type="ChEBI" id="CHEBI:43474"/>
        <dbReference type="ChEBI" id="CHEBI:137981"/>
        <dbReference type="ChEBI" id="CHEBI:147287"/>
        <dbReference type="ChEBI" id="CHEBI:456216"/>
        <dbReference type="EC" id="6.3.3.1"/>
    </reaction>
</comment>
<comment type="pathway">
    <text evidence="1">Purine metabolism; IMP biosynthesis via de novo pathway; 5-amino-1-(5-phospho-D-ribosyl)imidazole from N(2)-formyl-N(1)-(5-phospho-D-ribosyl)glycinamide: step 2/2.</text>
</comment>
<comment type="subcellular location">
    <subcellularLocation>
        <location evidence="1">Cytoplasm</location>
    </subcellularLocation>
</comment>
<comment type="similarity">
    <text evidence="1">Belongs to the AIR synthase family.</text>
</comment>
<accession>Q3A515</accession>
<organism>
    <name type="scientific">Syntrophotalea carbinolica (strain DSM 2380 / NBRC 103641 / GraBd1)</name>
    <name type="common">Pelobacter carbinolicus</name>
    <dbReference type="NCBI Taxonomy" id="338963"/>
    <lineage>
        <taxon>Bacteria</taxon>
        <taxon>Pseudomonadati</taxon>
        <taxon>Thermodesulfobacteriota</taxon>
        <taxon>Desulfuromonadia</taxon>
        <taxon>Desulfuromonadales</taxon>
        <taxon>Syntrophotaleaceae</taxon>
        <taxon>Syntrophotalea</taxon>
    </lineage>
</organism>
<protein>
    <recommendedName>
        <fullName evidence="1">Phosphoribosylformylglycinamidine cyclo-ligase</fullName>
        <ecNumber evidence="1">6.3.3.1</ecNumber>
    </recommendedName>
    <alternativeName>
        <fullName evidence="1">AIR synthase</fullName>
    </alternativeName>
    <alternativeName>
        <fullName evidence="1">AIRS</fullName>
    </alternativeName>
    <alternativeName>
        <fullName evidence="1">Phosphoribosyl-aminoimidazole synthetase</fullName>
    </alternativeName>
</protein>
<dbReference type="EC" id="6.3.3.1" evidence="1"/>
<dbReference type="EMBL" id="CP000142">
    <property type="protein sequence ID" value="ABA88542.1"/>
    <property type="molecule type" value="Genomic_DNA"/>
</dbReference>
<dbReference type="RefSeq" id="WP_011341017.1">
    <property type="nucleotide sequence ID" value="NC_007498.2"/>
</dbReference>
<dbReference type="SMR" id="Q3A515"/>
<dbReference type="STRING" id="338963.Pcar_1293"/>
<dbReference type="KEGG" id="pca:Pcar_1293"/>
<dbReference type="eggNOG" id="COG0150">
    <property type="taxonomic scope" value="Bacteria"/>
</dbReference>
<dbReference type="HOGENOM" id="CLU_047116_0_0_7"/>
<dbReference type="UniPathway" id="UPA00074">
    <property type="reaction ID" value="UER00129"/>
</dbReference>
<dbReference type="Proteomes" id="UP000002534">
    <property type="component" value="Chromosome"/>
</dbReference>
<dbReference type="GO" id="GO:0005829">
    <property type="term" value="C:cytosol"/>
    <property type="evidence" value="ECO:0007669"/>
    <property type="project" value="TreeGrafter"/>
</dbReference>
<dbReference type="GO" id="GO:0005524">
    <property type="term" value="F:ATP binding"/>
    <property type="evidence" value="ECO:0007669"/>
    <property type="project" value="UniProtKB-KW"/>
</dbReference>
<dbReference type="GO" id="GO:0004637">
    <property type="term" value="F:phosphoribosylamine-glycine ligase activity"/>
    <property type="evidence" value="ECO:0007669"/>
    <property type="project" value="TreeGrafter"/>
</dbReference>
<dbReference type="GO" id="GO:0004641">
    <property type="term" value="F:phosphoribosylformylglycinamidine cyclo-ligase activity"/>
    <property type="evidence" value="ECO:0007669"/>
    <property type="project" value="UniProtKB-UniRule"/>
</dbReference>
<dbReference type="GO" id="GO:0006189">
    <property type="term" value="P:'de novo' IMP biosynthetic process"/>
    <property type="evidence" value="ECO:0007669"/>
    <property type="project" value="UniProtKB-UniRule"/>
</dbReference>
<dbReference type="GO" id="GO:0046084">
    <property type="term" value="P:adenine biosynthetic process"/>
    <property type="evidence" value="ECO:0007669"/>
    <property type="project" value="TreeGrafter"/>
</dbReference>
<dbReference type="CDD" id="cd02196">
    <property type="entry name" value="PurM"/>
    <property type="match status" value="1"/>
</dbReference>
<dbReference type="FunFam" id="3.30.1330.10:FF:000001">
    <property type="entry name" value="Phosphoribosylformylglycinamidine cyclo-ligase"/>
    <property type="match status" value="1"/>
</dbReference>
<dbReference type="FunFam" id="3.90.650.10:FF:000001">
    <property type="entry name" value="Phosphoribosylformylglycinamidine cyclo-ligase"/>
    <property type="match status" value="1"/>
</dbReference>
<dbReference type="Gene3D" id="3.90.650.10">
    <property type="entry name" value="PurM-like C-terminal domain"/>
    <property type="match status" value="1"/>
</dbReference>
<dbReference type="Gene3D" id="3.30.1330.10">
    <property type="entry name" value="PurM-like, N-terminal domain"/>
    <property type="match status" value="1"/>
</dbReference>
<dbReference type="HAMAP" id="MF_00741">
    <property type="entry name" value="AIRS"/>
    <property type="match status" value="1"/>
</dbReference>
<dbReference type="InterPro" id="IPR010918">
    <property type="entry name" value="PurM-like_C_dom"/>
</dbReference>
<dbReference type="InterPro" id="IPR036676">
    <property type="entry name" value="PurM-like_C_sf"/>
</dbReference>
<dbReference type="InterPro" id="IPR016188">
    <property type="entry name" value="PurM-like_N"/>
</dbReference>
<dbReference type="InterPro" id="IPR036921">
    <property type="entry name" value="PurM-like_N_sf"/>
</dbReference>
<dbReference type="InterPro" id="IPR004733">
    <property type="entry name" value="PurM_cligase"/>
</dbReference>
<dbReference type="NCBIfam" id="TIGR00878">
    <property type="entry name" value="purM"/>
    <property type="match status" value="1"/>
</dbReference>
<dbReference type="PANTHER" id="PTHR10520:SF12">
    <property type="entry name" value="TRIFUNCTIONAL PURINE BIOSYNTHETIC PROTEIN ADENOSINE-3"/>
    <property type="match status" value="1"/>
</dbReference>
<dbReference type="PANTHER" id="PTHR10520">
    <property type="entry name" value="TRIFUNCTIONAL PURINE BIOSYNTHETIC PROTEIN ADENOSINE-3-RELATED"/>
    <property type="match status" value="1"/>
</dbReference>
<dbReference type="Pfam" id="PF00586">
    <property type="entry name" value="AIRS"/>
    <property type="match status" value="1"/>
</dbReference>
<dbReference type="Pfam" id="PF02769">
    <property type="entry name" value="AIRS_C"/>
    <property type="match status" value="1"/>
</dbReference>
<dbReference type="SUPFAM" id="SSF56042">
    <property type="entry name" value="PurM C-terminal domain-like"/>
    <property type="match status" value="1"/>
</dbReference>
<dbReference type="SUPFAM" id="SSF55326">
    <property type="entry name" value="PurM N-terminal domain-like"/>
    <property type="match status" value="1"/>
</dbReference>
<feature type="chain" id="PRO_0000258377" description="Phosphoribosylformylglycinamidine cyclo-ligase">
    <location>
        <begin position="1"/>
        <end position="350"/>
    </location>
</feature>
<evidence type="ECO:0000255" key="1">
    <source>
        <dbReference type="HAMAP-Rule" id="MF_00741"/>
    </source>
</evidence>
<gene>
    <name evidence="1" type="primary">purM</name>
    <name type="ordered locus">Pcar_1293</name>
</gene>
<reference key="1">
    <citation type="submission" date="2005-10" db="EMBL/GenBank/DDBJ databases">
        <title>Complete sequence of Pelobacter carbinolicus DSM 2380.</title>
        <authorList>
            <person name="Copeland A."/>
            <person name="Lucas S."/>
            <person name="Lapidus A."/>
            <person name="Barry K."/>
            <person name="Detter J.C."/>
            <person name="Glavina T."/>
            <person name="Hammon N."/>
            <person name="Israni S."/>
            <person name="Pitluck S."/>
            <person name="Chertkov O."/>
            <person name="Schmutz J."/>
            <person name="Larimer F."/>
            <person name="Land M."/>
            <person name="Kyrpides N."/>
            <person name="Ivanova N."/>
            <person name="Richardson P."/>
        </authorList>
    </citation>
    <scope>NUCLEOTIDE SEQUENCE [LARGE SCALE GENOMIC DNA]</scope>
    <source>
        <strain>DSM 2380 / NBRC 103641 / GraBd1</strain>
    </source>
</reference>
<keyword id="KW-0067">ATP-binding</keyword>
<keyword id="KW-0963">Cytoplasm</keyword>
<keyword id="KW-0436">Ligase</keyword>
<keyword id="KW-0547">Nucleotide-binding</keyword>
<keyword id="KW-0658">Purine biosynthesis</keyword>
<keyword id="KW-1185">Reference proteome</keyword>
<name>PUR5_SYNC1</name>